<name>PRT2_SCOSC</name>
<evidence type="ECO:0000256" key="1">
    <source>
        <dbReference type="SAM" id="MobiDB-lite"/>
    </source>
</evidence>
<evidence type="ECO:0000269" key="2">
    <source>
    </source>
</evidence>
<evidence type="ECO:0000269" key="3">
    <source ref="2"/>
</evidence>
<evidence type="ECO:0000305" key="4"/>
<dbReference type="iPTMnet" id="P83265"/>
<dbReference type="GO" id="GO:0000786">
    <property type="term" value="C:nucleosome"/>
    <property type="evidence" value="ECO:0000304"/>
    <property type="project" value="UniProtKB"/>
</dbReference>
<dbReference type="GO" id="GO:0005634">
    <property type="term" value="C:nucleus"/>
    <property type="evidence" value="ECO:0000304"/>
    <property type="project" value="UniProtKB"/>
</dbReference>
<dbReference type="GO" id="GO:0003677">
    <property type="term" value="F:DNA binding"/>
    <property type="evidence" value="ECO:0000304"/>
    <property type="project" value="UniProtKB"/>
</dbReference>
<dbReference type="GO" id="GO:0030154">
    <property type="term" value="P:cell differentiation"/>
    <property type="evidence" value="ECO:0007669"/>
    <property type="project" value="UniProtKB-KW"/>
</dbReference>
<dbReference type="GO" id="GO:0007076">
    <property type="term" value="P:mitotic chromosome condensation"/>
    <property type="evidence" value="ECO:0000304"/>
    <property type="project" value="UniProtKB"/>
</dbReference>
<dbReference type="GO" id="GO:0006334">
    <property type="term" value="P:nucleosome assembly"/>
    <property type="evidence" value="ECO:0000304"/>
    <property type="project" value="UniProtKB"/>
</dbReference>
<dbReference type="GO" id="GO:0007283">
    <property type="term" value="P:spermatogenesis"/>
    <property type="evidence" value="ECO:0000304"/>
    <property type="project" value="UniProtKB"/>
</dbReference>
<sequence>MPRRRRRASRPIRRRRRARRSTAVRRRRRVVRRRR</sequence>
<keyword id="KW-0158">Chromosome</keyword>
<keyword id="KW-0217">Developmental protein</keyword>
<keyword id="KW-0221">Differentiation</keyword>
<keyword id="KW-0903">Direct protein sequencing</keyword>
<keyword id="KW-0226">DNA condensation</keyword>
<keyword id="KW-0238">DNA-binding</keyword>
<keyword id="KW-0544">Nucleosome core</keyword>
<keyword id="KW-0539">Nucleus</keyword>
<keyword id="KW-0597">Phosphoprotein</keyword>
<keyword id="KW-0744">Spermatogenesis</keyword>
<accession>P83265</accession>
<proteinExistence type="evidence at protein level"/>
<reference evidence="4" key="1">
    <citation type="journal article" date="1998" name="Comp. Biochem. Physiol.">
        <title>Primary structure of scombrine alpha: two different species with an identical protamine.</title>
        <authorList>
            <person name="Buesa C."/>
            <person name="del Valle L."/>
            <person name="Saperas N."/>
            <person name="Goethals M."/>
            <person name="Lloris D."/>
            <person name="Chiva M."/>
        </authorList>
    </citation>
    <scope>PROTEIN SEQUENCE OF 2-35</scope>
    <scope>FUNCTION</scope>
    <scope>SUBCELLULAR LOCATION</scope>
    <scope>TISSUE SPECIFICITY</scope>
    <scope>PHOSPHORYLATION AT SER-9 AND SER-21</scope>
    <source>
        <tissue>Sperm</tissue>
    </source>
</reference>
<reference evidence="4" key="2">
    <citation type="unpublished observations" date="2002-01">
        <authorList>
            <person name="Buesa C."/>
            <person name="del Valle L."/>
            <person name="Saperas N."/>
            <person name="Goethals M."/>
            <person name="Lloris D."/>
            <person name="Chiva M."/>
        </authorList>
    </citation>
    <scope>MASS SPECTROMETRY OF UNPHOSPHORYLATED FORM</scope>
</reference>
<comment type="function">
    <text evidence="2">Protamines substitute for histones in the chromatin of sperm during the haploid phase of spermatogenesis. They compact sperm DNA into a highly condensed, stable and inactive complex.</text>
</comment>
<comment type="subcellular location">
    <subcellularLocation>
        <location evidence="2">Nucleus</location>
    </subcellularLocation>
    <subcellularLocation>
        <location evidence="2">Chromosome</location>
    </subcellularLocation>
</comment>
<comment type="tissue specificity">
    <text evidence="2">Gonads.</text>
</comment>
<comment type="PTM">
    <text evidence="2">Phosphorylated in immature sperm. Dephosphorylated in mature sperm allowing a stronger interaction with DNA.</text>
</comment>
<comment type="mass spectrometry">
    <text>Unphosphorylated.</text>
</comment>
<comment type="miscellaneous">
    <text evidence="2">Two isoforms exist, a major form and a minor form. This is the minor form.</text>
</comment>
<organism evidence="4">
    <name type="scientific">Scomber scombrus</name>
    <name type="common">Atlantic mackerel</name>
    <name type="synonym">Scomber vernalis</name>
    <dbReference type="NCBI Taxonomy" id="13677"/>
    <lineage>
        <taxon>Eukaryota</taxon>
        <taxon>Metazoa</taxon>
        <taxon>Chordata</taxon>
        <taxon>Craniata</taxon>
        <taxon>Vertebrata</taxon>
        <taxon>Euteleostomi</taxon>
        <taxon>Actinopterygii</taxon>
        <taxon>Neopterygii</taxon>
        <taxon>Teleostei</taxon>
        <taxon>Neoteleostei</taxon>
        <taxon>Acanthomorphata</taxon>
        <taxon>Pelagiaria</taxon>
        <taxon>Scombriformes</taxon>
        <taxon>Scombridae</taxon>
        <taxon>Scomber</taxon>
    </lineage>
</organism>
<protein>
    <recommendedName>
        <fullName>Sperm protamine alpha isoform 2</fullName>
    </recommendedName>
    <alternativeName>
        <fullName>Scombrine alpha-2</fullName>
    </alternativeName>
</protein>
<feature type="initiator methionine" description="Removed" evidence="2">
    <location>
        <position position="1"/>
    </location>
</feature>
<feature type="peptide" id="PRO_0000044849" description="Sperm protamine alpha isoform 2">
    <location>
        <begin position="2"/>
        <end position="35"/>
    </location>
</feature>
<feature type="region of interest" description="Disordered" evidence="1">
    <location>
        <begin position="1"/>
        <end position="35"/>
    </location>
</feature>
<feature type="modified residue" description="Phosphoserine" evidence="2">
    <location>
        <position position="9"/>
    </location>
</feature>
<feature type="modified residue" description="Phosphoserine" evidence="2">
    <location>
        <position position="21"/>
    </location>
</feature>